<organism>
    <name type="scientific">Mycobacterium avium (strain 104)</name>
    <dbReference type="NCBI Taxonomy" id="243243"/>
    <lineage>
        <taxon>Bacteria</taxon>
        <taxon>Bacillati</taxon>
        <taxon>Actinomycetota</taxon>
        <taxon>Actinomycetes</taxon>
        <taxon>Mycobacteriales</taxon>
        <taxon>Mycobacteriaceae</taxon>
        <taxon>Mycobacterium</taxon>
        <taxon>Mycobacterium avium complex (MAC)</taxon>
    </lineage>
</organism>
<feature type="chain" id="PRO_0000400457" description="L-cysteine:1D-myo-inositol 2-amino-2-deoxy-alpha-D-glucopyranoside ligase">
    <location>
        <begin position="1"/>
        <end position="384"/>
    </location>
</feature>
<feature type="short sequence motif" description="'HIGH' region" evidence="1">
    <location>
        <begin position="18"/>
        <end position="28"/>
    </location>
</feature>
<feature type="short sequence motif" description="'ERGGDP' region" evidence="1">
    <location>
        <begin position="159"/>
        <end position="164"/>
    </location>
</feature>
<feature type="short sequence motif" description="'KMSKS' region" evidence="1">
    <location>
        <begin position="261"/>
        <end position="265"/>
    </location>
</feature>
<feature type="binding site" evidence="1">
    <location>
        <begin position="16"/>
        <end position="19"/>
    </location>
    <ligand>
        <name>L-cysteinyl-5'-AMP</name>
        <dbReference type="ChEBI" id="CHEBI:144924"/>
    </ligand>
</feature>
<feature type="binding site" evidence="1">
    <location>
        <position position="16"/>
    </location>
    <ligand>
        <name>Zn(2+)</name>
        <dbReference type="ChEBI" id="CHEBI:29105"/>
    </ligand>
</feature>
<feature type="binding site" evidence="1">
    <location>
        <position position="31"/>
    </location>
    <ligand>
        <name>L-cysteinyl-5'-AMP</name>
        <dbReference type="ChEBI" id="CHEBI:144924"/>
    </ligand>
</feature>
<feature type="binding site" evidence="1">
    <location>
        <begin position="54"/>
        <end position="56"/>
    </location>
    <ligand>
        <name>L-cysteinyl-5'-AMP</name>
        <dbReference type="ChEBI" id="CHEBI:144924"/>
    </ligand>
</feature>
<feature type="binding site" evidence="1">
    <location>
        <position position="199"/>
    </location>
    <ligand>
        <name>L-cysteinyl-5'-AMP</name>
        <dbReference type="ChEBI" id="CHEBI:144924"/>
    </ligand>
</feature>
<feature type="binding site" evidence="1">
    <location>
        <position position="203"/>
    </location>
    <ligand>
        <name>Zn(2+)</name>
        <dbReference type="ChEBI" id="CHEBI:29105"/>
    </ligand>
</feature>
<feature type="binding site" evidence="1">
    <location>
        <begin position="221"/>
        <end position="223"/>
    </location>
    <ligand>
        <name>L-cysteinyl-5'-AMP</name>
        <dbReference type="ChEBI" id="CHEBI:144924"/>
    </ligand>
</feature>
<feature type="binding site" evidence="1">
    <location>
        <position position="228"/>
    </location>
    <ligand>
        <name>Zn(2+)</name>
        <dbReference type="ChEBI" id="CHEBI:29105"/>
    </ligand>
</feature>
<feature type="binding site" evidence="1">
    <location>
        <position position="255"/>
    </location>
    <ligand>
        <name>L-cysteinyl-5'-AMP</name>
        <dbReference type="ChEBI" id="CHEBI:144924"/>
    </ligand>
</feature>
<dbReference type="EC" id="6.3.1.13" evidence="1"/>
<dbReference type="EMBL" id="CP000479">
    <property type="protein sequence ID" value="ABK67723.1"/>
    <property type="molecule type" value="Genomic_DNA"/>
</dbReference>
<dbReference type="SMR" id="A0QF76"/>
<dbReference type="KEGG" id="mav:MAV_2361"/>
<dbReference type="HOGENOM" id="CLU_013528_0_0_11"/>
<dbReference type="Proteomes" id="UP000001574">
    <property type="component" value="Chromosome"/>
</dbReference>
<dbReference type="GO" id="GO:0005829">
    <property type="term" value="C:cytosol"/>
    <property type="evidence" value="ECO:0007669"/>
    <property type="project" value="TreeGrafter"/>
</dbReference>
<dbReference type="GO" id="GO:0005524">
    <property type="term" value="F:ATP binding"/>
    <property type="evidence" value="ECO:0007669"/>
    <property type="project" value="UniProtKB-KW"/>
</dbReference>
<dbReference type="GO" id="GO:0035446">
    <property type="term" value="F:cysteine-glucosaminylinositol ligase activity"/>
    <property type="evidence" value="ECO:0007669"/>
    <property type="project" value="UniProtKB-UniRule"/>
</dbReference>
<dbReference type="GO" id="GO:0004817">
    <property type="term" value="F:cysteine-tRNA ligase activity"/>
    <property type="evidence" value="ECO:0007669"/>
    <property type="project" value="TreeGrafter"/>
</dbReference>
<dbReference type="GO" id="GO:0008270">
    <property type="term" value="F:zinc ion binding"/>
    <property type="evidence" value="ECO:0007669"/>
    <property type="project" value="UniProtKB-UniRule"/>
</dbReference>
<dbReference type="GO" id="GO:0006423">
    <property type="term" value="P:cysteinyl-tRNA aminoacylation"/>
    <property type="evidence" value="ECO:0007669"/>
    <property type="project" value="TreeGrafter"/>
</dbReference>
<dbReference type="GO" id="GO:0010125">
    <property type="term" value="P:mycothiol biosynthetic process"/>
    <property type="evidence" value="ECO:0007669"/>
    <property type="project" value="UniProtKB-UniRule"/>
</dbReference>
<dbReference type="CDD" id="cd07955">
    <property type="entry name" value="Anticodon_Ia_Cys_like"/>
    <property type="match status" value="1"/>
</dbReference>
<dbReference type="FunFam" id="3.40.50.620:FF:000134">
    <property type="entry name" value="L-cysteine:1D-myo-inositol 2-amino-2-deoxy-alpha-D-glucopyranoside ligase"/>
    <property type="match status" value="1"/>
</dbReference>
<dbReference type="Gene3D" id="1.20.120.640">
    <property type="entry name" value="Anticodon-binding domain of a subclass of class I aminoacyl-tRNA synthetases"/>
    <property type="match status" value="1"/>
</dbReference>
<dbReference type="Gene3D" id="3.40.50.620">
    <property type="entry name" value="HUPs"/>
    <property type="match status" value="1"/>
</dbReference>
<dbReference type="HAMAP" id="MF_01697">
    <property type="entry name" value="MshC"/>
    <property type="match status" value="1"/>
</dbReference>
<dbReference type="InterPro" id="IPR024909">
    <property type="entry name" value="Cys-tRNA/MSH_ligase"/>
</dbReference>
<dbReference type="InterPro" id="IPR017812">
    <property type="entry name" value="Mycothiol_ligase_MshC"/>
</dbReference>
<dbReference type="InterPro" id="IPR014729">
    <property type="entry name" value="Rossmann-like_a/b/a_fold"/>
</dbReference>
<dbReference type="InterPro" id="IPR032678">
    <property type="entry name" value="tRNA-synt_1_cat_dom"/>
</dbReference>
<dbReference type="InterPro" id="IPR009080">
    <property type="entry name" value="tRNAsynth_Ia_anticodon-bd"/>
</dbReference>
<dbReference type="NCBIfam" id="TIGR03447">
    <property type="entry name" value="mycothiol_MshC"/>
    <property type="match status" value="1"/>
</dbReference>
<dbReference type="PANTHER" id="PTHR10890:SF3">
    <property type="entry name" value="CYSTEINE--TRNA LIGASE, CYTOPLASMIC"/>
    <property type="match status" value="1"/>
</dbReference>
<dbReference type="PANTHER" id="PTHR10890">
    <property type="entry name" value="CYSTEINYL-TRNA SYNTHETASE"/>
    <property type="match status" value="1"/>
</dbReference>
<dbReference type="Pfam" id="PF01406">
    <property type="entry name" value="tRNA-synt_1e"/>
    <property type="match status" value="1"/>
</dbReference>
<dbReference type="PRINTS" id="PR00983">
    <property type="entry name" value="TRNASYNTHCYS"/>
</dbReference>
<dbReference type="SUPFAM" id="SSF47323">
    <property type="entry name" value="Anticodon-binding domain of a subclass of class I aminoacyl-tRNA synthetases"/>
    <property type="match status" value="1"/>
</dbReference>
<dbReference type="SUPFAM" id="SSF52374">
    <property type="entry name" value="Nucleotidylyl transferase"/>
    <property type="match status" value="1"/>
</dbReference>
<evidence type="ECO:0000255" key="1">
    <source>
        <dbReference type="HAMAP-Rule" id="MF_01697"/>
    </source>
</evidence>
<reference key="1">
    <citation type="submission" date="2006-10" db="EMBL/GenBank/DDBJ databases">
        <authorList>
            <person name="Fleischmann R.D."/>
            <person name="Dodson R.J."/>
            <person name="Haft D.H."/>
            <person name="Merkel J.S."/>
            <person name="Nelson W.C."/>
            <person name="Fraser C.M."/>
        </authorList>
    </citation>
    <scope>NUCLEOTIDE SEQUENCE [LARGE SCALE GENOMIC DNA]</scope>
    <source>
        <strain>104</strain>
    </source>
</reference>
<protein>
    <recommendedName>
        <fullName evidence="1">L-cysteine:1D-myo-inositol 2-amino-2-deoxy-alpha-D-glucopyranoside ligase</fullName>
        <shortName evidence="1">L-Cys:GlcN-Ins ligase</shortName>
        <ecNumber evidence="1">6.3.1.13</ecNumber>
    </recommendedName>
    <alternativeName>
        <fullName evidence="1">Mycothiol ligase</fullName>
        <shortName evidence="1">MSH ligase</shortName>
    </alternativeName>
</protein>
<sequence length="384" mass="41819">MAAGAGPGSAATMYVCGITPYDATHLGHAATYLAFDLIYRQWLDLGHDVHYVQNVTDVDDPLLERAARDGIDWRALAEREVSLFREDMAALRILAPRDYVGATEAIADVVELVEKMLASGAAYVVDGEFPDIYYRADATLQFGYESGYDRETMLRLFAERGGDPQRPGKTDALDALLWRAARPGEPSWPSPFGNGRPGWHVECAAIALSRIGSGLDIQGGGSDLIFPHHEFTAAHAECVRGERRFARHYVHAGMIGWDGHKMSKSRGNLVLVSQLRGRGVEPAAIRLGLLAGHFRGDRYWSDQVLDEATARLRRWRTATALPAGPDATDVIARVRQYLADDLNTPKALAALDGWTTDALDYGGHDTAAPRLVATAVDALLGVAL</sequence>
<accession>A0QF76</accession>
<keyword id="KW-0067">ATP-binding</keyword>
<keyword id="KW-0436">Ligase</keyword>
<keyword id="KW-0479">Metal-binding</keyword>
<keyword id="KW-0547">Nucleotide-binding</keyword>
<keyword id="KW-0862">Zinc</keyword>
<name>MSHC_MYCA1</name>
<gene>
    <name evidence="1" type="primary">mshC</name>
    <name type="ordered locus">MAV_2361</name>
</gene>
<proteinExistence type="inferred from homology"/>
<comment type="function">
    <text evidence="1">Catalyzes the ATP-dependent condensation of GlcN-Ins and L-cysteine to form L-Cys-GlcN-Ins.</text>
</comment>
<comment type="catalytic activity">
    <reaction evidence="1">
        <text>1D-myo-inositol 2-amino-2-deoxy-alpha-D-glucopyranoside + L-cysteine + ATP = 1D-myo-inositol 2-(L-cysteinylamino)-2-deoxy-alpha-D-glucopyranoside + AMP + diphosphate + H(+)</text>
        <dbReference type="Rhea" id="RHEA:26176"/>
        <dbReference type="ChEBI" id="CHEBI:15378"/>
        <dbReference type="ChEBI" id="CHEBI:30616"/>
        <dbReference type="ChEBI" id="CHEBI:33019"/>
        <dbReference type="ChEBI" id="CHEBI:35235"/>
        <dbReference type="ChEBI" id="CHEBI:58886"/>
        <dbReference type="ChEBI" id="CHEBI:58887"/>
        <dbReference type="ChEBI" id="CHEBI:456215"/>
        <dbReference type="EC" id="6.3.1.13"/>
    </reaction>
</comment>
<comment type="cofactor">
    <cofactor evidence="1">
        <name>Zn(2+)</name>
        <dbReference type="ChEBI" id="CHEBI:29105"/>
    </cofactor>
    <text evidence="1">Binds 1 zinc ion per subunit.</text>
</comment>
<comment type="subunit">
    <text evidence="1">Monomer.</text>
</comment>
<comment type="similarity">
    <text evidence="1">Belongs to the class-I aminoacyl-tRNA synthetase family. MshC subfamily.</text>
</comment>